<name>VP74L_DICDI</name>
<sequence length="262" mass="29609">MNPDNDNDSLPLLTLPEQLFLLILNPETGKLPYTFVPLFHGFVGCGIAELQLMDKVIVTKQNSQSFNNNKMLIKVIDHSKTGDTFLDYILSKLSNSFAQKGLQMATAILTISVGLNKMKRITETIAQSLIKKGFIRGTLKRSVLFKNKSIYEVIDYQAKLSVESSICKVLSTPPDYPDNCLRELIILLTFKQYEDFLIKPKLMDSLISRLYHPEQCAHIKANLRLINKNFYKEPSEVHLTNDPSVKMLSLVIGGIRNAITSE</sequence>
<protein>
    <recommendedName>
        <fullName>VPS74-like protein DDB_G0288371</fullName>
    </recommendedName>
</protein>
<accession>Q54J20</accession>
<gene>
    <name type="ORF">DDB_G0288371</name>
</gene>
<feature type="chain" id="PRO_0000393699" description="VPS74-like protein DDB_G0288371">
    <location>
        <begin position="1"/>
        <end position="262"/>
    </location>
</feature>
<organism>
    <name type="scientific">Dictyostelium discoideum</name>
    <name type="common">Social amoeba</name>
    <dbReference type="NCBI Taxonomy" id="44689"/>
    <lineage>
        <taxon>Eukaryota</taxon>
        <taxon>Amoebozoa</taxon>
        <taxon>Evosea</taxon>
        <taxon>Eumycetozoa</taxon>
        <taxon>Dictyostelia</taxon>
        <taxon>Dictyosteliales</taxon>
        <taxon>Dictyosteliaceae</taxon>
        <taxon>Dictyostelium</taxon>
    </lineage>
</organism>
<reference key="1">
    <citation type="journal article" date="2005" name="Nature">
        <title>The genome of the social amoeba Dictyostelium discoideum.</title>
        <authorList>
            <person name="Eichinger L."/>
            <person name="Pachebat J.A."/>
            <person name="Gloeckner G."/>
            <person name="Rajandream M.A."/>
            <person name="Sucgang R."/>
            <person name="Berriman M."/>
            <person name="Song J."/>
            <person name="Olsen R."/>
            <person name="Szafranski K."/>
            <person name="Xu Q."/>
            <person name="Tunggal B."/>
            <person name="Kummerfeld S."/>
            <person name="Madera M."/>
            <person name="Konfortov B.A."/>
            <person name="Rivero F."/>
            <person name="Bankier A.T."/>
            <person name="Lehmann R."/>
            <person name="Hamlin N."/>
            <person name="Davies R."/>
            <person name="Gaudet P."/>
            <person name="Fey P."/>
            <person name="Pilcher K."/>
            <person name="Chen G."/>
            <person name="Saunders D."/>
            <person name="Sodergren E.J."/>
            <person name="Davis P."/>
            <person name="Kerhornou A."/>
            <person name="Nie X."/>
            <person name="Hall N."/>
            <person name="Anjard C."/>
            <person name="Hemphill L."/>
            <person name="Bason N."/>
            <person name="Farbrother P."/>
            <person name="Desany B."/>
            <person name="Just E."/>
            <person name="Morio T."/>
            <person name="Rost R."/>
            <person name="Churcher C.M."/>
            <person name="Cooper J."/>
            <person name="Haydock S."/>
            <person name="van Driessche N."/>
            <person name="Cronin A."/>
            <person name="Goodhead I."/>
            <person name="Muzny D.M."/>
            <person name="Mourier T."/>
            <person name="Pain A."/>
            <person name="Lu M."/>
            <person name="Harper D."/>
            <person name="Lindsay R."/>
            <person name="Hauser H."/>
            <person name="James K.D."/>
            <person name="Quiles M."/>
            <person name="Madan Babu M."/>
            <person name="Saito T."/>
            <person name="Buchrieser C."/>
            <person name="Wardroper A."/>
            <person name="Felder M."/>
            <person name="Thangavelu M."/>
            <person name="Johnson D."/>
            <person name="Knights A."/>
            <person name="Loulseged H."/>
            <person name="Mungall K.L."/>
            <person name="Oliver K."/>
            <person name="Price C."/>
            <person name="Quail M.A."/>
            <person name="Urushihara H."/>
            <person name="Hernandez J."/>
            <person name="Rabbinowitsch E."/>
            <person name="Steffen D."/>
            <person name="Sanders M."/>
            <person name="Ma J."/>
            <person name="Kohara Y."/>
            <person name="Sharp S."/>
            <person name="Simmonds M.N."/>
            <person name="Spiegler S."/>
            <person name="Tivey A."/>
            <person name="Sugano S."/>
            <person name="White B."/>
            <person name="Walker D."/>
            <person name="Woodward J.R."/>
            <person name="Winckler T."/>
            <person name="Tanaka Y."/>
            <person name="Shaulsky G."/>
            <person name="Schleicher M."/>
            <person name="Weinstock G.M."/>
            <person name="Rosenthal A."/>
            <person name="Cox E.C."/>
            <person name="Chisholm R.L."/>
            <person name="Gibbs R.A."/>
            <person name="Loomis W.F."/>
            <person name="Platzer M."/>
            <person name="Kay R.R."/>
            <person name="Williams J.G."/>
            <person name="Dear P.H."/>
            <person name="Noegel A.A."/>
            <person name="Barrell B.G."/>
            <person name="Kuspa A."/>
        </authorList>
    </citation>
    <scope>NUCLEOTIDE SEQUENCE [LARGE SCALE GENOMIC DNA]</scope>
    <source>
        <strain>AX4</strain>
    </source>
</reference>
<proteinExistence type="inferred from homology"/>
<evidence type="ECO:0000250" key="1"/>
<evidence type="ECO:0000305" key="2"/>
<dbReference type="EMBL" id="AAFI02000111">
    <property type="protein sequence ID" value="EAL63282.1"/>
    <property type="molecule type" value="Genomic_DNA"/>
</dbReference>
<dbReference type="RefSeq" id="XP_636781.1">
    <property type="nucleotide sequence ID" value="XM_631689.1"/>
</dbReference>
<dbReference type="SMR" id="Q54J20"/>
<dbReference type="STRING" id="44689.Q54J20"/>
<dbReference type="PaxDb" id="44689-DDB0234232"/>
<dbReference type="EnsemblProtists" id="EAL63282">
    <property type="protein sequence ID" value="EAL63282"/>
    <property type="gene ID" value="DDB_G0288371"/>
</dbReference>
<dbReference type="GeneID" id="8626584"/>
<dbReference type="KEGG" id="ddi:DDB_G0288371"/>
<dbReference type="dictyBase" id="DDB_G0288371"/>
<dbReference type="VEuPathDB" id="AmoebaDB:DDB_G0288371"/>
<dbReference type="eggNOG" id="KOG3983">
    <property type="taxonomic scope" value="Eukaryota"/>
</dbReference>
<dbReference type="HOGENOM" id="CLU_1063293_0_0_1"/>
<dbReference type="InParanoid" id="Q54J20"/>
<dbReference type="OMA" id="NIEMSCC"/>
<dbReference type="PRO" id="PR:Q54J20"/>
<dbReference type="Proteomes" id="UP000002195">
    <property type="component" value="Chromosome 5"/>
</dbReference>
<dbReference type="GO" id="GO:0032580">
    <property type="term" value="C:Golgi cisterna membrane"/>
    <property type="evidence" value="ECO:0007669"/>
    <property type="project" value="UniProtKB-SubCell"/>
</dbReference>
<dbReference type="GO" id="GO:0070273">
    <property type="term" value="F:phosphatidylinositol-4-phosphate binding"/>
    <property type="evidence" value="ECO:0007669"/>
    <property type="project" value="InterPro"/>
</dbReference>
<dbReference type="GO" id="GO:0015031">
    <property type="term" value="P:protein transport"/>
    <property type="evidence" value="ECO:0007669"/>
    <property type="project" value="UniProtKB-KW"/>
</dbReference>
<dbReference type="Gene3D" id="1.10.3630.10">
    <property type="entry name" value="yeast vps74-n-term truncation variant domain like"/>
    <property type="match status" value="1"/>
</dbReference>
<dbReference type="InterPro" id="IPR008628">
    <property type="entry name" value="GPP34-like"/>
</dbReference>
<dbReference type="InterPro" id="IPR038261">
    <property type="entry name" value="GPP34-like_sf"/>
</dbReference>
<dbReference type="Pfam" id="PF05719">
    <property type="entry name" value="GPP34"/>
    <property type="match status" value="1"/>
</dbReference>
<comment type="function">
    <text evidence="1">Phosphatidylinositol-4-phosphate-binding protein that links Golgi membranes to the cytoskeleton and may participate in the tensile force required for vesicle budding from the Golgi. Thereby, may play a role in Golgi membrane trafficking. May also bind to the coatomer to regulate Golgi membrane trafficking. May play a role in anterograde transport from the Golgi to the plasma membrane and regulate secretion. May be involved in vacuolar protein sorting (By similarity).</text>
</comment>
<comment type="subcellular location">
    <subcellularLocation>
        <location evidence="1">Golgi apparatus</location>
        <location evidence="1">Golgi stack membrane</location>
        <topology evidence="1">Peripheral membrane protein</topology>
        <orientation evidence="1">Cytoplasmic side</orientation>
    </subcellularLocation>
</comment>
<comment type="similarity">
    <text evidence="2">Belongs to the GOLPH3/VPS74 family.</text>
</comment>
<keyword id="KW-0333">Golgi apparatus</keyword>
<keyword id="KW-0446">Lipid-binding</keyword>
<keyword id="KW-0472">Membrane</keyword>
<keyword id="KW-0653">Protein transport</keyword>
<keyword id="KW-1185">Reference proteome</keyword>
<keyword id="KW-0813">Transport</keyword>